<accession>Q5RDQ8</accession>
<reference key="1">
    <citation type="submission" date="2004-11" db="EMBL/GenBank/DDBJ databases">
        <authorList>
            <consortium name="The German cDNA consortium"/>
        </authorList>
    </citation>
    <scope>NUCLEOTIDE SEQUENCE [LARGE SCALE MRNA]</scope>
    <source>
        <tissue>Brain cortex</tissue>
    </source>
</reference>
<proteinExistence type="evidence at transcript level"/>
<comment type="function">
    <text evidence="3">G-protein coupled receptor activated by glutamate that regulates axon outgrowth through the MAPK-cAMP-PKA signaling pathway during neuronal development (By similarity). Ligand binding causes a conformation change that triggers signaling via guanine nucleotide-binding proteins (G proteins) and modulates the activity of downstream effectors, such as adenylate cyclase that it inhibits (By similarity).</text>
</comment>
<comment type="subunit">
    <text evidence="2 3">Homodimer (By similarity). Interacts with PICK1.</text>
</comment>
<comment type="subcellular location">
    <subcellularLocation>
        <location evidence="3">Cell membrane</location>
        <topology evidence="3">Multi-pass membrane protein</topology>
    </subcellularLocation>
</comment>
<comment type="similarity">
    <text evidence="5">Belongs to the G-protein coupled receptor 3 family.</text>
</comment>
<protein>
    <recommendedName>
        <fullName>Metabotropic glutamate receptor 7</fullName>
        <shortName>mGluR7</shortName>
    </recommendedName>
</protein>
<name>GRM7_PONAB</name>
<organism>
    <name type="scientific">Pongo abelii</name>
    <name type="common">Sumatran orangutan</name>
    <name type="synonym">Pongo pygmaeus abelii</name>
    <dbReference type="NCBI Taxonomy" id="9601"/>
    <lineage>
        <taxon>Eukaryota</taxon>
        <taxon>Metazoa</taxon>
        <taxon>Chordata</taxon>
        <taxon>Craniata</taxon>
        <taxon>Vertebrata</taxon>
        <taxon>Euteleostomi</taxon>
        <taxon>Mammalia</taxon>
        <taxon>Eutheria</taxon>
        <taxon>Euarchontoglires</taxon>
        <taxon>Primates</taxon>
        <taxon>Haplorrhini</taxon>
        <taxon>Catarrhini</taxon>
        <taxon>Hominidae</taxon>
        <taxon>Pongo</taxon>
    </lineage>
</organism>
<dbReference type="EMBL" id="CR857845">
    <property type="protein sequence ID" value="CAH90099.1"/>
    <property type="molecule type" value="mRNA"/>
</dbReference>
<dbReference type="RefSeq" id="NP_001125005.1">
    <property type="nucleotide sequence ID" value="NM_001131533.1"/>
</dbReference>
<dbReference type="SMR" id="Q5RDQ8"/>
<dbReference type="FunCoup" id="Q5RDQ8">
    <property type="interactions" value="645"/>
</dbReference>
<dbReference type="STRING" id="9601.ENSPPYP00000015309"/>
<dbReference type="GlyCosmos" id="Q5RDQ8">
    <property type="glycosylation" value="4 sites, No reported glycans"/>
</dbReference>
<dbReference type="GeneID" id="100171884"/>
<dbReference type="KEGG" id="pon:100171884"/>
<dbReference type="CTD" id="2917"/>
<dbReference type="eggNOG" id="KOG1056">
    <property type="taxonomic scope" value="Eukaryota"/>
</dbReference>
<dbReference type="InParanoid" id="Q5RDQ8"/>
<dbReference type="OrthoDB" id="425344at2759"/>
<dbReference type="Proteomes" id="UP000001595">
    <property type="component" value="Unplaced"/>
</dbReference>
<dbReference type="GO" id="GO:0005886">
    <property type="term" value="C:plasma membrane"/>
    <property type="evidence" value="ECO:0000250"/>
    <property type="project" value="UniProtKB"/>
</dbReference>
<dbReference type="GO" id="GO:0008066">
    <property type="term" value="F:glutamate receptor activity"/>
    <property type="evidence" value="ECO:0000250"/>
    <property type="project" value="UniProtKB"/>
</dbReference>
<dbReference type="GO" id="GO:0001642">
    <property type="term" value="F:group III metabotropic glutamate receptor activity"/>
    <property type="evidence" value="ECO:0000250"/>
    <property type="project" value="UniProtKB"/>
</dbReference>
<dbReference type="GO" id="GO:0046983">
    <property type="term" value="F:protein dimerization activity"/>
    <property type="evidence" value="ECO:0000250"/>
    <property type="project" value="UniProtKB"/>
</dbReference>
<dbReference type="GO" id="GO:0007196">
    <property type="term" value="P:adenylate cyclase-inhibiting G protein-coupled glutamate receptor signaling pathway"/>
    <property type="evidence" value="ECO:0000250"/>
    <property type="project" value="UniProtKB"/>
</dbReference>
<dbReference type="GO" id="GO:0061564">
    <property type="term" value="P:axon development"/>
    <property type="evidence" value="ECO:0000250"/>
    <property type="project" value="UniProtKB"/>
</dbReference>
<dbReference type="CDD" id="cd15451">
    <property type="entry name" value="7tmC_mGluR7"/>
    <property type="match status" value="1"/>
</dbReference>
<dbReference type="CDD" id="cd06376">
    <property type="entry name" value="PBP1_mGluR_groupIII"/>
    <property type="match status" value="1"/>
</dbReference>
<dbReference type="FunFam" id="3.40.50.2300:FF:000196">
    <property type="entry name" value="Glutamate metabotropic receptor 7"/>
    <property type="match status" value="1"/>
</dbReference>
<dbReference type="FunFam" id="3.40.50.2300:FF:000009">
    <property type="entry name" value="Glutamate receptor, metabotropic 4"/>
    <property type="match status" value="1"/>
</dbReference>
<dbReference type="FunFam" id="2.10.50.30:FF:000001">
    <property type="entry name" value="metabotropic glutamate receptor 1"/>
    <property type="match status" value="1"/>
</dbReference>
<dbReference type="FunFam" id="3.40.50.2300:FF:000176">
    <property type="entry name" value="metabotropic glutamate receptor 7"/>
    <property type="match status" value="1"/>
</dbReference>
<dbReference type="Gene3D" id="3.40.50.2300">
    <property type="match status" value="2"/>
</dbReference>
<dbReference type="Gene3D" id="2.10.50.30">
    <property type="entry name" value="GPCR, family 3, nine cysteines domain"/>
    <property type="match status" value="1"/>
</dbReference>
<dbReference type="InterPro" id="IPR001828">
    <property type="entry name" value="ANF_lig-bd_rcpt"/>
</dbReference>
<dbReference type="InterPro" id="IPR000337">
    <property type="entry name" value="GPCR_3"/>
</dbReference>
<dbReference type="InterPro" id="IPR011500">
    <property type="entry name" value="GPCR_3_9-Cys_dom"/>
</dbReference>
<dbReference type="InterPro" id="IPR038550">
    <property type="entry name" value="GPCR_3_9-Cys_sf"/>
</dbReference>
<dbReference type="InterPro" id="IPR017978">
    <property type="entry name" value="GPCR_3_C"/>
</dbReference>
<dbReference type="InterPro" id="IPR017979">
    <property type="entry name" value="GPCR_3_CS"/>
</dbReference>
<dbReference type="InterPro" id="IPR001883">
    <property type="entry name" value="GPCR_3_mGluR7"/>
</dbReference>
<dbReference type="InterPro" id="IPR000162">
    <property type="entry name" value="GPCR_3_mtglu_rcpt"/>
</dbReference>
<dbReference type="InterPro" id="IPR050726">
    <property type="entry name" value="mGluR"/>
</dbReference>
<dbReference type="InterPro" id="IPR028082">
    <property type="entry name" value="Peripla_BP_I"/>
</dbReference>
<dbReference type="PANTHER" id="PTHR24060">
    <property type="entry name" value="METABOTROPIC GLUTAMATE RECEPTOR"/>
    <property type="match status" value="1"/>
</dbReference>
<dbReference type="Pfam" id="PF00003">
    <property type="entry name" value="7tm_3"/>
    <property type="match status" value="1"/>
</dbReference>
<dbReference type="Pfam" id="PF01094">
    <property type="entry name" value="ANF_receptor"/>
    <property type="match status" value="1"/>
</dbReference>
<dbReference type="Pfam" id="PF07562">
    <property type="entry name" value="NCD3G"/>
    <property type="match status" value="1"/>
</dbReference>
<dbReference type="PRINTS" id="PR00248">
    <property type="entry name" value="GPCRMGR"/>
</dbReference>
<dbReference type="PRINTS" id="PR01057">
    <property type="entry name" value="MTABOTROPC7R"/>
</dbReference>
<dbReference type="PRINTS" id="PR00593">
    <property type="entry name" value="MTABOTROPICR"/>
</dbReference>
<dbReference type="SUPFAM" id="SSF53822">
    <property type="entry name" value="Periplasmic binding protein-like I"/>
    <property type="match status" value="1"/>
</dbReference>
<dbReference type="PROSITE" id="PS00979">
    <property type="entry name" value="G_PROTEIN_RECEP_F3_1"/>
    <property type="match status" value="1"/>
</dbReference>
<dbReference type="PROSITE" id="PS00980">
    <property type="entry name" value="G_PROTEIN_RECEP_F3_2"/>
    <property type="match status" value="1"/>
</dbReference>
<dbReference type="PROSITE" id="PS00981">
    <property type="entry name" value="G_PROTEIN_RECEP_F3_3"/>
    <property type="match status" value="1"/>
</dbReference>
<dbReference type="PROSITE" id="PS50259">
    <property type="entry name" value="G_PROTEIN_RECEP_F3_4"/>
    <property type="match status" value="1"/>
</dbReference>
<gene>
    <name type="primary">GRM7</name>
</gene>
<evidence type="ECO:0000250" key="1"/>
<evidence type="ECO:0000250" key="2">
    <source>
        <dbReference type="UniProtKB" id="P35400"/>
    </source>
</evidence>
<evidence type="ECO:0000250" key="3">
    <source>
        <dbReference type="UniProtKB" id="Q14831"/>
    </source>
</evidence>
<evidence type="ECO:0000255" key="4"/>
<evidence type="ECO:0000305" key="5"/>
<feature type="signal peptide" evidence="4">
    <location>
        <begin position="1"/>
        <end position="34"/>
    </location>
</feature>
<feature type="chain" id="PRO_0000042106" description="Metabotropic glutamate receptor 7">
    <location>
        <begin position="35"/>
        <end position="922"/>
    </location>
</feature>
<feature type="topological domain" description="Extracellular" evidence="4">
    <location>
        <begin position="35"/>
        <end position="590"/>
    </location>
</feature>
<feature type="transmembrane region" description="Helical; Name=1" evidence="4">
    <location>
        <begin position="591"/>
        <end position="615"/>
    </location>
</feature>
<feature type="topological domain" description="Cytoplasmic" evidence="4">
    <location>
        <begin position="616"/>
        <end position="627"/>
    </location>
</feature>
<feature type="transmembrane region" description="Helical; Name=2" evidence="4">
    <location>
        <begin position="628"/>
        <end position="648"/>
    </location>
</feature>
<feature type="topological domain" description="Extracellular" evidence="4">
    <location>
        <begin position="649"/>
        <end position="654"/>
    </location>
</feature>
<feature type="transmembrane region" description="Helical; Name=3" evidence="4">
    <location>
        <begin position="655"/>
        <end position="675"/>
    </location>
</feature>
<feature type="topological domain" description="Cytoplasmic" evidence="4">
    <location>
        <begin position="676"/>
        <end position="702"/>
    </location>
</feature>
<feature type="transmembrane region" description="Helical; Name=4" evidence="4">
    <location>
        <begin position="703"/>
        <end position="723"/>
    </location>
</feature>
<feature type="topological domain" description="Extracellular" evidence="4">
    <location>
        <begin position="724"/>
        <end position="753"/>
    </location>
</feature>
<feature type="transmembrane region" description="Helical; Name=5" evidence="4">
    <location>
        <begin position="754"/>
        <end position="775"/>
    </location>
</feature>
<feature type="topological domain" description="Cytoplasmic" evidence="4">
    <location>
        <begin position="776"/>
        <end position="788"/>
    </location>
</feature>
<feature type="transmembrane region" description="Helical; Name=6" evidence="4">
    <location>
        <begin position="789"/>
        <end position="810"/>
    </location>
</feature>
<feature type="topological domain" description="Extracellular" evidence="4">
    <location>
        <begin position="811"/>
        <end position="825"/>
    </location>
</feature>
<feature type="transmembrane region" description="Helical; Name=7" evidence="4">
    <location>
        <begin position="826"/>
        <end position="850"/>
    </location>
</feature>
<feature type="topological domain" description="Cytoplasmic" evidence="4">
    <location>
        <begin position="851"/>
        <end position="922"/>
    </location>
</feature>
<feature type="binding site" evidence="1">
    <location>
        <position position="159"/>
    </location>
    <ligand>
        <name>L-glutamate</name>
        <dbReference type="ChEBI" id="CHEBI:29985"/>
    </ligand>
</feature>
<feature type="binding site" evidence="1">
    <location>
        <begin position="180"/>
        <end position="182"/>
    </location>
    <ligand>
        <name>L-glutamate</name>
        <dbReference type="ChEBI" id="CHEBI:29985"/>
    </ligand>
</feature>
<feature type="binding site" evidence="1">
    <location>
        <position position="230"/>
    </location>
    <ligand>
        <name>L-glutamate</name>
        <dbReference type="ChEBI" id="CHEBI:29985"/>
    </ligand>
</feature>
<feature type="binding site" evidence="1">
    <location>
        <position position="314"/>
    </location>
    <ligand>
        <name>L-glutamate</name>
        <dbReference type="ChEBI" id="CHEBI:29985"/>
    </ligand>
</feature>
<feature type="binding site" evidence="1">
    <location>
        <position position="407"/>
    </location>
    <ligand>
        <name>L-glutamate</name>
        <dbReference type="ChEBI" id="CHEBI:29985"/>
    </ligand>
</feature>
<feature type="glycosylation site" description="N-linked (GlcNAc...) asparagine" evidence="4">
    <location>
        <position position="98"/>
    </location>
</feature>
<feature type="glycosylation site" description="N-linked (GlcNAc...) asparagine" evidence="4">
    <location>
        <position position="458"/>
    </location>
</feature>
<feature type="glycosylation site" description="N-linked (GlcNAc...) asparagine" evidence="4">
    <location>
        <position position="486"/>
    </location>
</feature>
<feature type="glycosylation site" description="N-linked (GlcNAc...) asparagine" evidence="4">
    <location>
        <position position="572"/>
    </location>
</feature>
<feature type="disulfide bond" evidence="1">
    <location>
        <begin position="67"/>
        <end position="109"/>
    </location>
</feature>
<feature type="disulfide bond" evidence="1">
    <location>
        <begin position="249"/>
        <end position="541"/>
    </location>
</feature>
<feature type="disulfide bond" evidence="1">
    <location>
        <begin position="374"/>
        <end position="390"/>
    </location>
</feature>
<feature type="disulfide bond" evidence="1">
    <location>
        <begin position="430"/>
        <end position="437"/>
    </location>
</feature>
<feature type="disulfide bond" evidence="1">
    <location>
        <begin position="523"/>
        <end position="542"/>
    </location>
</feature>
<feature type="disulfide bond" evidence="1">
    <location>
        <begin position="527"/>
        <end position="545"/>
    </location>
</feature>
<feature type="disulfide bond" evidence="1">
    <location>
        <begin position="548"/>
        <end position="560"/>
    </location>
</feature>
<feature type="disulfide bond" evidence="1">
    <location>
        <begin position="563"/>
        <end position="576"/>
    </location>
</feature>
<sequence length="922" mass="103022">MVQLRKLLRVLTLMKFPCCVLEVLLCALAAAARGQEMYAPHSIRIEGDVTLGGLFPVHAKGPSGVPCGDIKRENGIHRLEAMLYALDQINSDPNLLPNVTLGARILDTCSRDTYALEQSLTFVQALIQKDTSDVRCTNGEPPVFVKPEKVVGVIGASGSSVSIMVANILRLFQIPQISYASTAPGLSDDRRYDFFSRVVPPDSFQAQAMVDIVKALGWNYVSTLASEGSYGEKGVESFTRISKEAGGLCIAQSVRIPQERKDRTIDFDRIIKQLLDTPNSRAVVIFANDEDIKQILAAAKRADQVGHFLWVGSDSWGSKINPLHQHEDIAEGAITIQPKRATVEGFDAYFTSRTLENNRRNVWFAEYWEENFNCKLTIGGSKKEDTDRKCTGQERIGKDSNYEQEGKVQFVIDAVYAMAHALHHMNKDLCADYRGVCPEMEQAGGKKLLKYIRNVNFNGSAGTPVMFNKNGDAPGRYDIFQYQTTNTSNPGYRLIGQWTDELQLNIEDMQWGKGVREIPPSVCTLPCKPGQRKKTQKGTPCCWTCEPCDGYQYQFDEMTCQHCPYDQRPNENRTGCQDIPIIKLEWHSPWAVIPVFLAMLGIIATIFVMATFIRYNDTPIVRASGRELSYVLLTGIFLCYIITFLMIAKPDVAVCSFRRVFLGLGMCISYAALLTKTNRIYRIFEQGKKSVTAPRLISPTSQLAITSSLISVQLLGVFIWFGVDPPNIIIDYDEHKTMNPEQARGVLKCDITDLQIICSLGYSILLMVTCTVYAIKTRGVPENFNEAKPIGFTMYTTCIVWLAFIPIFFGTAQSAEKLYIQTTTLTISMNLSASVALGMLYMPKVYIIIFHPELNVQKRKRSFKAVVTAATMSSRLSHKPSDRPNGEAKTELCENVDPNNCIPPVRKSVQKSVTWYTIPPTV</sequence>
<keyword id="KW-1003">Cell membrane</keyword>
<keyword id="KW-1015">Disulfide bond</keyword>
<keyword id="KW-0297">G-protein coupled receptor</keyword>
<keyword id="KW-0325">Glycoprotein</keyword>
<keyword id="KW-0472">Membrane</keyword>
<keyword id="KW-0675">Receptor</keyword>
<keyword id="KW-1185">Reference proteome</keyword>
<keyword id="KW-0716">Sensory transduction</keyword>
<keyword id="KW-0732">Signal</keyword>
<keyword id="KW-0807">Transducer</keyword>
<keyword id="KW-0812">Transmembrane</keyword>
<keyword id="KW-1133">Transmembrane helix</keyword>